<feature type="chain" id="PRO_1000056206" description="Bifunctional protein GlmU">
    <location>
        <begin position="1"/>
        <end position="459"/>
    </location>
</feature>
<feature type="region of interest" description="Pyrophosphorylase" evidence="1">
    <location>
        <begin position="1"/>
        <end position="229"/>
    </location>
</feature>
<feature type="region of interest" description="Linker" evidence="1">
    <location>
        <begin position="230"/>
        <end position="250"/>
    </location>
</feature>
<feature type="region of interest" description="N-acetyltransferase" evidence="1">
    <location>
        <begin position="251"/>
        <end position="459"/>
    </location>
</feature>
<feature type="active site" description="Proton acceptor" evidence="1">
    <location>
        <position position="362"/>
    </location>
</feature>
<feature type="binding site" evidence="1">
    <location>
        <begin position="8"/>
        <end position="11"/>
    </location>
    <ligand>
        <name>UDP-N-acetyl-alpha-D-glucosamine</name>
        <dbReference type="ChEBI" id="CHEBI:57705"/>
    </ligand>
</feature>
<feature type="binding site" evidence="1">
    <location>
        <position position="22"/>
    </location>
    <ligand>
        <name>UDP-N-acetyl-alpha-D-glucosamine</name>
        <dbReference type="ChEBI" id="CHEBI:57705"/>
    </ligand>
</feature>
<feature type="binding site" evidence="1">
    <location>
        <position position="72"/>
    </location>
    <ligand>
        <name>UDP-N-acetyl-alpha-D-glucosamine</name>
        <dbReference type="ChEBI" id="CHEBI:57705"/>
    </ligand>
</feature>
<feature type="binding site" evidence="1">
    <location>
        <begin position="77"/>
        <end position="78"/>
    </location>
    <ligand>
        <name>UDP-N-acetyl-alpha-D-glucosamine</name>
        <dbReference type="ChEBI" id="CHEBI:57705"/>
    </ligand>
</feature>
<feature type="binding site" evidence="1">
    <location>
        <position position="102"/>
    </location>
    <ligand>
        <name>Mg(2+)</name>
        <dbReference type="ChEBI" id="CHEBI:18420"/>
    </ligand>
</feature>
<feature type="binding site" evidence="1">
    <location>
        <position position="139"/>
    </location>
    <ligand>
        <name>UDP-N-acetyl-alpha-D-glucosamine</name>
        <dbReference type="ChEBI" id="CHEBI:57705"/>
    </ligand>
</feature>
<feature type="binding site" evidence="1">
    <location>
        <position position="154"/>
    </location>
    <ligand>
        <name>UDP-N-acetyl-alpha-D-glucosamine</name>
        <dbReference type="ChEBI" id="CHEBI:57705"/>
    </ligand>
</feature>
<feature type="binding site" evidence="1">
    <location>
        <position position="169"/>
    </location>
    <ligand>
        <name>UDP-N-acetyl-alpha-D-glucosamine</name>
        <dbReference type="ChEBI" id="CHEBI:57705"/>
    </ligand>
</feature>
<feature type="binding site" evidence="1">
    <location>
        <position position="227"/>
    </location>
    <ligand>
        <name>Mg(2+)</name>
        <dbReference type="ChEBI" id="CHEBI:18420"/>
    </ligand>
</feature>
<feature type="binding site" evidence="1">
    <location>
        <position position="227"/>
    </location>
    <ligand>
        <name>UDP-N-acetyl-alpha-D-glucosamine</name>
        <dbReference type="ChEBI" id="CHEBI:57705"/>
    </ligand>
</feature>
<feature type="binding site" evidence="1">
    <location>
        <position position="332"/>
    </location>
    <ligand>
        <name>UDP-N-acetyl-alpha-D-glucosamine</name>
        <dbReference type="ChEBI" id="CHEBI:57705"/>
    </ligand>
</feature>
<feature type="binding site" evidence="1">
    <location>
        <position position="350"/>
    </location>
    <ligand>
        <name>UDP-N-acetyl-alpha-D-glucosamine</name>
        <dbReference type="ChEBI" id="CHEBI:57705"/>
    </ligand>
</feature>
<feature type="binding site" evidence="1">
    <location>
        <position position="365"/>
    </location>
    <ligand>
        <name>UDP-N-acetyl-alpha-D-glucosamine</name>
        <dbReference type="ChEBI" id="CHEBI:57705"/>
    </ligand>
</feature>
<feature type="binding site" evidence="1">
    <location>
        <position position="376"/>
    </location>
    <ligand>
        <name>UDP-N-acetyl-alpha-D-glucosamine</name>
        <dbReference type="ChEBI" id="CHEBI:57705"/>
    </ligand>
</feature>
<feature type="binding site" evidence="1">
    <location>
        <position position="379"/>
    </location>
    <ligand>
        <name>acetyl-CoA</name>
        <dbReference type="ChEBI" id="CHEBI:57288"/>
    </ligand>
</feature>
<feature type="binding site" evidence="1">
    <location>
        <begin position="385"/>
        <end position="386"/>
    </location>
    <ligand>
        <name>acetyl-CoA</name>
        <dbReference type="ChEBI" id="CHEBI:57288"/>
    </ligand>
</feature>
<feature type="binding site" evidence="1">
    <location>
        <position position="404"/>
    </location>
    <ligand>
        <name>acetyl-CoA</name>
        <dbReference type="ChEBI" id="CHEBI:57288"/>
    </ligand>
</feature>
<feature type="binding site" evidence="1">
    <location>
        <position position="422"/>
    </location>
    <ligand>
        <name>acetyl-CoA</name>
        <dbReference type="ChEBI" id="CHEBI:57288"/>
    </ligand>
</feature>
<feature type="binding site" evidence="1">
    <location>
        <position position="439"/>
    </location>
    <ligand>
        <name>acetyl-CoA</name>
        <dbReference type="ChEBI" id="CHEBI:57288"/>
    </ligand>
</feature>
<accession>A3CPC4</accession>
<name>GLMU_STRSV</name>
<comment type="function">
    <text evidence="1">Catalyzes the last two sequential reactions in the de novo biosynthetic pathway for UDP-N-acetylglucosamine (UDP-GlcNAc). The C-terminal domain catalyzes the transfer of acetyl group from acetyl coenzyme A to glucosamine-1-phosphate (GlcN-1-P) to produce N-acetylglucosamine-1-phosphate (GlcNAc-1-P), which is converted into UDP-GlcNAc by the transfer of uridine 5-monophosphate (from uridine 5-triphosphate), a reaction catalyzed by the N-terminal domain.</text>
</comment>
<comment type="catalytic activity">
    <reaction evidence="1">
        <text>alpha-D-glucosamine 1-phosphate + acetyl-CoA = N-acetyl-alpha-D-glucosamine 1-phosphate + CoA + H(+)</text>
        <dbReference type="Rhea" id="RHEA:13725"/>
        <dbReference type="ChEBI" id="CHEBI:15378"/>
        <dbReference type="ChEBI" id="CHEBI:57287"/>
        <dbReference type="ChEBI" id="CHEBI:57288"/>
        <dbReference type="ChEBI" id="CHEBI:57776"/>
        <dbReference type="ChEBI" id="CHEBI:58516"/>
        <dbReference type="EC" id="2.3.1.157"/>
    </reaction>
</comment>
<comment type="catalytic activity">
    <reaction evidence="1">
        <text>N-acetyl-alpha-D-glucosamine 1-phosphate + UTP + H(+) = UDP-N-acetyl-alpha-D-glucosamine + diphosphate</text>
        <dbReference type="Rhea" id="RHEA:13509"/>
        <dbReference type="ChEBI" id="CHEBI:15378"/>
        <dbReference type="ChEBI" id="CHEBI:33019"/>
        <dbReference type="ChEBI" id="CHEBI:46398"/>
        <dbReference type="ChEBI" id="CHEBI:57705"/>
        <dbReference type="ChEBI" id="CHEBI:57776"/>
        <dbReference type="EC" id="2.7.7.23"/>
    </reaction>
</comment>
<comment type="cofactor">
    <cofactor evidence="1">
        <name>Mg(2+)</name>
        <dbReference type="ChEBI" id="CHEBI:18420"/>
    </cofactor>
    <text evidence="1">Binds 1 Mg(2+) ion per subunit.</text>
</comment>
<comment type="pathway">
    <text evidence="1">Nucleotide-sugar biosynthesis; UDP-N-acetyl-alpha-D-glucosamine biosynthesis; N-acetyl-alpha-D-glucosamine 1-phosphate from alpha-D-glucosamine 6-phosphate (route II): step 2/2.</text>
</comment>
<comment type="pathway">
    <text evidence="1">Nucleotide-sugar biosynthesis; UDP-N-acetyl-alpha-D-glucosamine biosynthesis; UDP-N-acetyl-alpha-D-glucosamine from N-acetyl-alpha-D-glucosamine 1-phosphate: step 1/1.</text>
</comment>
<comment type="pathway">
    <text evidence="1">Bacterial outer membrane biogenesis; LPS lipid A biosynthesis.</text>
</comment>
<comment type="subunit">
    <text evidence="1">Homotrimer.</text>
</comment>
<comment type="subcellular location">
    <subcellularLocation>
        <location evidence="1">Cytoplasm</location>
    </subcellularLocation>
</comment>
<comment type="similarity">
    <text evidence="1">In the N-terminal section; belongs to the N-acetylglucosamine-1-phosphate uridyltransferase family.</text>
</comment>
<comment type="similarity">
    <text evidence="1">In the C-terminal section; belongs to the transferase hexapeptide repeat family.</text>
</comment>
<gene>
    <name evidence="1" type="primary">glmU</name>
    <name type="ordered locus">SSA_1642</name>
</gene>
<dbReference type="EC" id="2.7.7.23" evidence="1"/>
<dbReference type="EC" id="2.3.1.157" evidence="1"/>
<dbReference type="EMBL" id="CP000387">
    <property type="protein sequence ID" value="ABN45029.1"/>
    <property type="molecule type" value="Genomic_DNA"/>
</dbReference>
<dbReference type="RefSeq" id="WP_002899862.1">
    <property type="nucleotide sequence ID" value="NC_009009.1"/>
</dbReference>
<dbReference type="RefSeq" id="YP_001035579.1">
    <property type="nucleotide sequence ID" value="NC_009009.1"/>
</dbReference>
<dbReference type="SMR" id="A3CPC4"/>
<dbReference type="STRING" id="388919.SSA_1642"/>
<dbReference type="KEGG" id="ssa:SSA_1642"/>
<dbReference type="PATRIC" id="fig|388919.9.peg.1559"/>
<dbReference type="eggNOG" id="COG1207">
    <property type="taxonomic scope" value="Bacteria"/>
</dbReference>
<dbReference type="HOGENOM" id="CLU_029499_15_2_9"/>
<dbReference type="OrthoDB" id="9775031at2"/>
<dbReference type="UniPathway" id="UPA00113">
    <property type="reaction ID" value="UER00532"/>
</dbReference>
<dbReference type="UniPathway" id="UPA00113">
    <property type="reaction ID" value="UER00533"/>
</dbReference>
<dbReference type="UniPathway" id="UPA00973"/>
<dbReference type="Proteomes" id="UP000002148">
    <property type="component" value="Chromosome"/>
</dbReference>
<dbReference type="GO" id="GO:0005737">
    <property type="term" value="C:cytoplasm"/>
    <property type="evidence" value="ECO:0007669"/>
    <property type="project" value="UniProtKB-SubCell"/>
</dbReference>
<dbReference type="GO" id="GO:0016020">
    <property type="term" value="C:membrane"/>
    <property type="evidence" value="ECO:0007669"/>
    <property type="project" value="GOC"/>
</dbReference>
<dbReference type="GO" id="GO:0019134">
    <property type="term" value="F:glucosamine-1-phosphate N-acetyltransferase activity"/>
    <property type="evidence" value="ECO:0007669"/>
    <property type="project" value="UniProtKB-UniRule"/>
</dbReference>
<dbReference type="GO" id="GO:0000287">
    <property type="term" value="F:magnesium ion binding"/>
    <property type="evidence" value="ECO:0007669"/>
    <property type="project" value="UniProtKB-UniRule"/>
</dbReference>
<dbReference type="GO" id="GO:0003977">
    <property type="term" value="F:UDP-N-acetylglucosamine diphosphorylase activity"/>
    <property type="evidence" value="ECO:0007669"/>
    <property type="project" value="UniProtKB-UniRule"/>
</dbReference>
<dbReference type="GO" id="GO:0000902">
    <property type="term" value="P:cell morphogenesis"/>
    <property type="evidence" value="ECO:0007669"/>
    <property type="project" value="UniProtKB-UniRule"/>
</dbReference>
<dbReference type="GO" id="GO:0071555">
    <property type="term" value="P:cell wall organization"/>
    <property type="evidence" value="ECO:0007669"/>
    <property type="project" value="UniProtKB-KW"/>
</dbReference>
<dbReference type="GO" id="GO:0009245">
    <property type="term" value="P:lipid A biosynthetic process"/>
    <property type="evidence" value="ECO:0007669"/>
    <property type="project" value="UniProtKB-UniRule"/>
</dbReference>
<dbReference type="GO" id="GO:0009252">
    <property type="term" value="P:peptidoglycan biosynthetic process"/>
    <property type="evidence" value="ECO:0007669"/>
    <property type="project" value="UniProtKB-UniRule"/>
</dbReference>
<dbReference type="GO" id="GO:0008360">
    <property type="term" value="P:regulation of cell shape"/>
    <property type="evidence" value="ECO:0007669"/>
    <property type="project" value="UniProtKB-KW"/>
</dbReference>
<dbReference type="GO" id="GO:0006048">
    <property type="term" value="P:UDP-N-acetylglucosamine biosynthetic process"/>
    <property type="evidence" value="ECO:0007669"/>
    <property type="project" value="UniProtKB-UniPathway"/>
</dbReference>
<dbReference type="CDD" id="cd02540">
    <property type="entry name" value="GT2_GlmU_N_bac"/>
    <property type="match status" value="1"/>
</dbReference>
<dbReference type="CDD" id="cd03353">
    <property type="entry name" value="LbH_GlmU_C"/>
    <property type="match status" value="1"/>
</dbReference>
<dbReference type="Gene3D" id="2.160.10.10">
    <property type="entry name" value="Hexapeptide repeat proteins"/>
    <property type="match status" value="1"/>
</dbReference>
<dbReference type="Gene3D" id="3.90.550.10">
    <property type="entry name" value="Spore Coat Polysaccharide Biosynthesis Protein SpsA, Chain A"/>
    <property type="match status" value="1"/>
</dbReference>
<dbReference type="HAMAP" id="MF_01631">
    <property type="entry name" value="GlmU"/>
    <property type="match status" value="1"/>
</dbReference>
<dbReference type="InterPro" id="IPR005882">
    <property type="entry name" value="Bifunctional_GlmU"/>
</dbReference>
<dbReference type="InterPro" id="IPR050065">
    <property type="entry name" value="GlmU-like"/>
</dbReference>
<dbReference type="InterPro" id="IPR038009">
    <property type="entry name" value="GlmU_C_LbH"/>
</dbReference>
<dbReference type="InterPro" id="IPR001451">
    <property type="entry name" value="Hexapep"/>
</dbReference>
<dbReference type="InterPro" id="IPR018357">
    <property type="entry name" value="Hexapep_transf_CS"/>
</dbReference>
<dbReference type="InterPro" id="IPR005835">
    <property type="entry name" value="NTP_transferase_dom"/>
</dbReference>
<dbReference type="InterPro" id="IPR029044">
    <property type="entry name" value="Nucleotide-diphossugar_trans"/>
</dbReference>
<dbReference type="InterPro" id="IPR011004">
    <property type="entry name" value="Trimer_LpxA-like_sf"/>
</dbReference>
<dbReference type="NCBIfam" id="TIGR01173">
    <property type="entry name" value="glmU"/>
    <property type="match status" value="1"/>
</dbReference>
<dbReference type="NCBIfam" id="NF010934">
    <property type="entry name" value="PRK14354.1"/>
    <property type="match status" value="1"/>
</dbReference>
<dbReference type="PANTHER" id="PTHR43584:SF3">
    <property type="entry name" value="BIFUNCTIONAL PROTEIN GLMU"/>
    <property type="match status" value="1"/>
</dbReference>
<dbReference type="PANTHER" id="PTHR43584">
    <property type="entry name" value="NUCLEOTIDYL TRANSFERASE"/>
    <property type="match status" value="1"/>
</dbReference>
<dbReference type="Pfam" id="PF14602">
    <property type="entry name" value="Hexapep_2"/>
    <property type="match status" value="1"/>
</dbReference>
<dbReference type="Pfam" id="PF00483">
    <property type="entry name" value="NTP_transferase"/>
    <property type="match status" value="1"/>
</dbReference>
<dbReference type="SUPFAM" id="SSF53448">
    <property type="entry name" value="Nucleotide-diphospho-sugar transferases"/>
    <property type="match status" value="1"/>
</dbReference>
<dbReference type="SUPFAM" id="SSF51161">
    <property type="entry name" value="Trimeric LpxA-like enzymes"/>
    <property type="match status" value="1"/>
</dbReference>
<dbReference type="PROSITE" id="PS00101">
    <property type="entry name" value="HEXAPEP_TRANSFERASES"/>
    <property type="match status" value="1"/>
</dbReference>
<keyword id="KW-0012">Acyltransferase</keyword>
<keyword id="KW-0133">Cell shape</keyword>
<keyword id="KW-0961">Cell wall biogenesis/degradation</keyword>
<keyword id="KW-0963">Cytoplasm</keyword>
<keyword id="KW-0460">Magnesium</keyword>
<keyword id="KW-0479">Metal-binding</keyword>
<keyword id="KW-0511">Multifunctional enzyme</keyword>
<keyword id="KW-0548">Nucleotidyltransferase</keyword>
<keyword id="KW-0573">Peptidoglycan synthesis</keyword>
<keyword id="KW-1185">Reference proteome</keyword>
<keyword id="KW-0677">Repeat</keyword>
<keyword id="KW-0808">Transferase</keyword>
<proteinExistence type="inferred from homology"/>
<evidence type="ECO:0000255" key="1">
    <source>
        <dbReference type="HAMAP-Rule" id="MF_01631"/>
    </source>
</evidence>
<reference key="1">
    <citation type="journal article" date="2007" name="J. Bacteriol.">
        <title>Genome of the opportunistic pathogen Streptococcus sanguinis.</title>
        <authorList>
            <person name="Xu P."/>
            <person name="Alves J.M."/>
            <person name="Kitten T."/>
            <person name="Brown A."/>
            <person name="Chen Z."/>
            <person name="Ozaki L.S."/>
            <person name="Manque P."/>
            <person name="Ge X."/>
            <person name="Serrano M.G."/>
            <person name="Puiu D."/>
            <person name="Hendricks S."/>
            <person name="Wang Y."/>
            <person name="Chaplin M.D."/>
            <person name="Akan D."/>
            <person name="Paik S."/>
            <person name="Peterson D.L."/>
            <person name="Macrina F.L."/>
            <person name="Buck G.A."/>
        </authorList>
    </citation>
    <scope>NUCLEOTIDE SEQUENCE [LARGE SCALE GENOMIC DNA]</scope>
    <source>
        <strain>SK36</strain>
    </source>
</reference>
<sequence length="459" mass="49562">MTNYAIILAAGKGTRMKSDLPKVLHKVAGISMLEHVFRSVSAIDPEKTVTVVGHKAELVEQVLAGQTDFVRQTEQLGTGHAVMMAEPVLENLTGQTLVIAGDTPLITGESLKNLIDFHINHKNVATILTAEADNPFGYGRIVRNQHDEVLKIVEQKDASDFEQQIKEINTGTYVFDNARLFEALKNINTNNAQGEYYITDVIGIFRENGEKVGAYTLKDFDESLGVNDRVALATAESVMRRRINQQHMVNGVSFVNPHATYIGVDVEIAPEVQVEANVTLKGQTKIGAETILTNGTYIVDSVIGERTVITNSMIEESSVADGVTVGPYAHIRPGSSLAKDVHVGNFVEVKGSSIGENTKAGHLTYIGNSEVGANVNFGAGTITVNYDGQKKYKTIIGDNVFVGSNSTIIAPVELGDNSLVGAGSTITKDVPADAIALGRGRQINKEDYAKRLPHHPQNK</sequence>
<organism>
    <name type="scientific">Streptococcus sanguinis (strain SK36)</name>
    <dbReference type="NCBI Taxonomy" id="388919"/>
    <lineage>
        <taxon>Bacteria</taxon>
        <taxon>Bacillati</taxon>
        <taxon>Bacillota</taxon>
        <taxon>Bacilli</taxon>
        <taxon>Lactobacillales</taxon>
        <taxon>Streptococcaceae</taxon>
        <taxon>Streptococcus</taxon>
    </lineage>
</organism>
<protein>
    <recommendedName>
        <fullName evidence="1">Bifunctional protein GlmU</fullName>
    </recommendedName>
    <domain>
        <recommendedName>
            <fullName evidence="1">UDP-N-acetylglucosamine pyrophosphorylase</fullName>
            <ecNumber evidence="1">2.7.7.23</ecNumber>
        </recommendedName>
        <alternativeName>
            <fullName evidence="1">N-acetylglucosamine-1-phosphate uridyltransferase</fullName>
        </alternativeName>
    </domain>
    <domain>
        <recommendedName>
            <fullName evidence="1">Glucosamine-1-phosphate N-acetyltransferase</fullName>
            <ecNumber evidence="1">2.3.1.157</ecNumber>
        </recommendedName>
    </domain>
</protein>